<accession>Q6FXA5</accession>
<name>TYW4_CANGA</name>
<evidence type="ECO:0000250" key="1"/>
<evidence type="ECO:0000305" key="2"/>
<comment type="function">
    <text evidence="1">Probable S-adenosyl-L-methionine-dependent methyltransferase that acts as a component of the wybutosine biosynthesis pathway. Wybutosine is a hyper modified guanosine with a tricyclic base found at the 3'-position adjacent to the anticodon of eukaryotic phenylalanine tRNA. May methylate the carboxyl group of leucine residues to form alpha-leucine ester residues (By similarity).</text>
</comment>
<comment type="catalytic activity">
    <reaction>
        <text>7-[(3S)-3-amino-3-carboxypropyl]wyosine(37) in tRNA(Phe) + S-adenosyl-L-methionine = 7-[(3S)-(3-amino-3-methoxycarbonyl)propyl]wyosine(37) in tRNA(Phe) + S-adenosyl-L-homocysteine</text>
        <dbReference type="Rhea" id="RHEA:36903"/>
        <dbReference type="Rhea" id="RHEA-COMP:10379"/>
        <dbReference type="Rhea" id="RHEA-COMP:11844"/>
        <dbReference type="ChEBI" id="CHEBI:57856"/>
        <dbReference type="ChEBI" id="CHEBI:59789"/>
        <dbReference type="ChEBI" id="CHEBI:73543"/>
        <dbReference type="ChEBI" id="CHEBI:74275"/>
        <dbReference type="EC" id="2.1.1.290"/>
    </reaction>
</comment>
<comment type="catalytic activity">
    <reaction>
        <text>7-[(3S)-(3-amino-3-methoxycarbonyl)propyl]wyosine(37) in tRNA(Phe) + S-adenosyl-L-methionine + CO2 = wybutosine(37) in tRNA(Phe) + S-adenosyl-L-homocysteine + 2 H(+)</text>
        <dbReference type="Rhea" id="RHEA:37119"/>
        <dbReference type="Rhea" id="RHEA-COMP:11844"/>
        <dbReference type="Rhea" id="RHEA-COMP:11847"/>
        <dbReference type="ChEBI" id="CHEBI:15378"/>
        <dbReference type="ChEBI" id="CHEBI:16526"/>
        <dbReference type="ChEBI" id="CHEBI:57856"/>
        <dbReference type="ChEBI" id="CHEBI:59789"/>
        <dbReference type="ChEBI" id="CHEBI:73544"/>
        <dbReference type="ChEBI" id="CHEBI:74275"/>
        <dbReference type="EC" id="2.3.1.231"/>
    </reaction>
</comment>
<comment type="pathway">
    <text>tRNA modification; wybutosine-tRNA(Phe) biosynthesis.</text>
</comment>
<comment type="similarity">
    <text evidence="2">Belongs to the methyltransferase superfamily. LCMT family.</text>
</comment>
<dbReference type="EC" id="2.1.1.290"/>
<dbReference type="EC" id="2.3.1.231"/>
<dbReference type="EMBL" id="CR380948">
    <property type="protein sequence ID" value="CAG57934.1"/>
    <property type="molecule type" value="Genomic_DNA"/>
</dbReference>
<dbReference type="RefSeq" id="XP_445034.1">
    <property type="nucleotide sequence ID" value="XM_445034.1"/>
</dbReference>
<dbReference type="SMR" id="Q6FXA5"/>
<dbReference type="FunCoup" id="Q6FXA5">
    <property type="interactions" value="125"/>
</dbReference>
<dbReference type="STRING" id="284593.Q6FXA5"/>
<dbReference type="EnsemblFungi" id="CAGL0B01485g-T">
    <property type="protein sequence ID" value="CAGL0B01485g-T-p1"/>
    <property type="gene ID" value="CAGL0B01485g"/>
</dbReference>
<dbReference type="KEGG" id="cgr:2886671"/>
<dbReference type="CGD" id="CAL0127682">
    <property type="gene designation" value="CAGL0B01485g"/>
</dbReference>
<dbReference type="VEuPathDB" id="FungiDB:CAGL0B01485g"/>
<dbReference type="eggNOG" id="KOG2918">
    <property type="taxonomic scope" value="Eukaryota"/>
</dbReference>
<dbReference type="HOGENOM" id="CLU_002761_0_0_1"/>
<dbReference type="InParanoid" id="Q6FXA5"/>
<dbReference type="OMA" id="FCILEQF"/>
<dbReference type="UniPathway" id="UPA00375"/>
<dbReference type="Proteomes" id="UP000002428">
    <property type="component" value="Chromosome B"/>
</dbReference>
<dbReference type="GO" id="GO:0008175">
    <property type="term" value="F:tRNA methyltransferase activity"/>
    <property type="evidence" value="ECO:0007669"/>
    <property type="project" value="EnsemblFungi"/>
</dbReference>
<dbReference type="GO" id="GO:0030488">
    <property type="term" value="P:tRNA methylation"/>
    <property type="evidence" value="ECO:0007669"/>
    <property type="project" value="EnsemblFungi"/>
</dbReference>
<dbReference type="GO" id="GO:0031591">
    <property type="term" value="P:wybutosine biosynthetic process"/>
    <property type="evidence" value="ECO:0007669"/>
    <property type="project" value="EnsemblFungi"/>
</dbReference>
<dbReference type="Gene3D" id="2.120.10.80">
    <property type="entry name" value="Kelch-type beta propeller"/>
    <property type="match status" value="1"/>
</dbReference>
<dbReference type="Gene3D" id="3.40.50.150">
    <property type="entry name" value="Vaccinia Virus protein VP39"/>
    <property type="match status" value="1"/>
</dbReference>
<dbReference type="InterPro" id="IPR011043">
    <property type="entry name" value="Gal_Oxase/kelch_b-propeller"/>
</dbReference>
<dbReference type="InterPro" id="IPR015915">
    <property type="entry name" value="Kelch-typ_b-propeller"/>
</dbReference>
<dbReference type="InterPro" id="IPR007213">
    <property type="entry name" value="Ppm1/Ppm2/Tcmp"/>
</dbReference>
<dbReference type="InterPro" id="IPR029063">
    <property type="entry name" value="SAM-dependent_MTases_sf"/>
</dbReference>
<dbReference type="PANTHER" id="PTHR46529">
    <property type="entry name" value="TRNA WYBUTOSINE-SYNTHESIZING PROTEIN 4"/>
    <property type="match status" value="1"/>
</dbReference>
<dbReference type="PANTHER" id="PTHR46529:SF1">
    <property type="entry name" value="TRNA WYBUTOSINE-SYNTHESIZING PROTEIN 4"/>
    <property type="match status" value="1"/>
</dbReference>
<dbReference type="Pfam" id="PF13418">
    <property type="entry name" value="Kelch_4"/>
    <property type="match status" value="1"/>
</dbReference>
<dbReference type="Pfam" id="PF04072">
    <property type="entry name" value="LCM"/>
    <property type="match status" value="1"/>
</dbReference>
<dbReference type="SUPFAM" id="SSF50965">
    <property type="entry name" value="Galactose oxidase, central domain"/>
    <property type="match status" value="1"/>
</dbReference>
<dbReference type="SUPFAM" id="SSF53335">
    <property type="entry name" value="S-adenosyl-L-methionine-dependent methyltransferases"/>
    <property type="match status" value="1"/>
</dbReference>
<proteinExistence type="inferred from homology"/>
<sequence length="674" mass="76295">MSTQIKREKPIKKQFQKKKFADLAVQGTNNSSIASKRSVELTYLPKLGVGSNAEKLQPGKPYFRYFVPKKIKRSPCINRGYWLRLHAVRSHIESILDSCQENITIINLGCGYDPLPFEMLDPQNPQYSRYSNRLNFIDIDYPDLLNIKSGVIKETPELLSIIGGIDPTETNMIISERYKTIPCDLYDMPAFEALLKSENLGHPNTIKIFIAEVSLAYMKHEKADDIIASCSKFPNSHFIMLEQIIPVGEYEPFSGRMLKHFSKNESPLQTVTKYQTIESQIERFRRYNFTNVNAGDMFQLWNSLSSNVHSKIENIEPFDELEEFHLFCHHYMICHATNNEQFKFNESIKFREPEVLPSLPISGLRIDSIDKIGFSKRFGSSVISKDSIIYTGGASPYRSDEADVINLEECTIETLSNMKLPDARVCHSYDSLMDGKLDILIGGRKAPHQPFNDVFIFEKQTASWEKVATLDYPIYRHATSSLSNDKLLLFGGNFCLKEPFLTITVKSETQIVVRSINCPDSIKSSIGAAMCYNEASNDVIILGGSSNGTEVSDKLIIMSYDDKSETLTVKKEVTNDLFKRYGSKIIHLTDDEYLVVGGTSPDRLFDASNSIITYNSRSDEIKSVRIPDHIWQGDELMLVGFELQKLNGKIIIFGGGATCYGFGSVNNSIYSIEK</sequence>
<organism>
    <name type="scientific">Candida glabrata (strain ATCC 2001 / BCRC 20586 / JCM 3761 / NBRC 0622 / NRRL Y-65 / CBS 138)</name>
    <name type="common">Yeast</name>
    <name type="synonym">Nakaseomyces glabratus</name>
    <dbReference type="NCBI Taxonomy" id="284593"/>
    <lineage>
        <taxon>Eukaryota</taxon>
        <taxon>Fungi</taxon>
        <taxon>Dikarya</taxon>
        <taxon>Ascomycota</taxon>
        <taxon>Saccharomycotina</taxon>
        <taxon>Saccharomycetes</taxon>
        <taxon>Saccharomycetales</taxon>
        <taxon>Saccharomycetaceae</taxon>
        <taxon>Nakaseomyces</taxon>
    </lineage>
</organism>
<gene>
    <name type="primary">PPM2</name>
    <name type="synonym">TYW4</name>
    <name type="ordered locus">CAGL0B01485g</name>
</gene>
<reference key="1">
    <citation type="journal article" date="2004" name="Nature">
        <title>Genome evolution in yeasts.</title>
        <authorList>
            <person name="Dujon B."/>
            <person name="Sherman D."/>
            <person name="Fischer G."/>
            <person name="Durrens P."/>
            <person name="Casaregola S."/>
            <person name="Lafontaine I."/>
            <person name="de Montigny J."/>
            <person name="Marck C."/>
            <person name="Neuveglise C."/>
            <person name="Talla E."/>
            <person name="Goffard N."/>
            <person name="Frangeul L."/>
            <person name="Aigle M."/>
            <person name="Anthouard V."/>
            <person name="Babour A."/>
            <person name="Barbe V."/>
            <person name="Barnay S."/>
            <person name="Blanchin S."/>
            <person name="Beckerich J.-M."/>
            <person name="Beyne E."/>
            <person name="Bleykasten C."/>
            <person name="Boisrame A."/>
            <person name="Boyer J."/>
            <person name="Cattolico L."/>
            <person name="Confanioleri F."/>
            <person name="de Daruvar A."/>
            <person name="Despons L."/>
            <person name="Fabre E."/>
            <person name="Fairhead C."/>
            <person name="Ferry-Dumazet H."/>
            <person name="Groppi A."/>
            <person name="Hantraye F."/>
            <person name="Hennequin C."/>
            <person name="Jauniaux N."/>
            <person name="Joyet P."/>
            <person name="Kachouri R."/>
            <person name="Kerrest A."/>
            <person name="Koszul R."/>
            <person name="Lemaire M."/>
            <person name="Lesur I."/>
            <person name="Ma L."/>
            <person name="Muller H."/>
            <person name="Nicaud J.-M."/>
            <person name="Nikolski M."/>
            <person name="Oztas S."/>
            <person name="Ozier-Kalogeropoulos O."/>
            <person name="Pellenz S."/>
            <person name="Potier S."/>
            <person name="Richard G.-F."/>
            <person name="Straub M.-L."/>
            <person name="Suleau A."/>
            <person name="Swennen D."/>
            <person name="Tekaia F."/>
            <person name="Wesolowski-Louvel M."/>
            <person name="Westhof E."/>
            <person name="Wirth B."/>
            <person name="Zeniou-Meyer M."/>
            <person name="Zivanovic Y."/>
            <person name="Bolotin-Fukuhara M."/>
            <person name="Thierry A."/>
            <person name="Bouchier C."/>
            <person name="Caudron B."/>
            <person name="Scarpelli C."/>
            <person name="Gaillardin C."/>
            <person name="Weissenbach J."/>
            <person name="Wincker P."/>
            <person name="Souciet J.-L."/>
        </authorList>
    </citation>
    <scope>NUCLEOTIDE SEQUENCE [LARGE SCALE GENOMIC DNA]</scope>
    <source>
        <strain>ATCC 2001 / BCRC 20586 / JCM 3761 / NBRC 0622 / NRRL Y-65 / CBS 138</strain>
    </source>
</reference>
<keyword id="KW-0489">Methyltransferase</keyword>
<keyword id="KW-1185">Reference proteome</keyword>
<keyword id="KW-0949">S-adenosyl-L-methionine</keyword>
<keyword id="KW-0808">Transferase</keyword>
<keyword id="KW-0819">tRNA processing</keyword>
<protein>
    <recommendedName>
        <fullName>tRNA wybutosine-synthesizing protein 4</fullName>
        <shortName>tRNA-yW synthesizing protein 4</shortName>
        <ecNumber>2.1.1.290</ecNumber>
        <ecNumber>2.3.1.231</ecNumber>
    </recommendedName>
    <alternativeName>
        <fullName>Leucine carboxyl methyltransferase 2</fullName>
    </alternativeName>
    <alternativeName>
        <fullName>tRNA(Phe) (7-(3-amino-3-(methoxycarbonyl)propyl)wyosine(37)-N)-methoxycarbonyltransferase</fullName>
    </alternativeName>
    <alternativeName>
        <fullName>tRNA(Phe) (7-(3-amino-3-carboxypropyl)wyosine(37)-O)-methyltransferase</fullName>
    </alternativeName>
</protein>
<feature type="chain" id="PRO_0000226140" description="tRNA wybutosine-synthesizing protein 4">
    <location>
        <begin position="1"/>
        <end position="674"/>
    </location>
</feature>
<feature type="binding site" evidence="1">
    <location>
        <position position="84"/>
    </location>
    <ligand>
        <name>S-adenosyl-L-methionine</name>
        <dbReference type="ChEBI" id="CHEBI:59789"/>
    </ligand>
</feature>
<feature type="binding site" evidence="1">
    <location>
        <position position="109"/>
    </location>
    <ligand>
        <name>S-adenosyl-L-methionine</name>
        <dbReference type="ChEBI" id="CHEBI:59789"/>
    </ligand>
</feature>
<feature type="binding site" evidence="1">
    <location>
        <position position="140"/>
    </location>
    <ligand>
        <name>S-adenosyl-L-methionine</name>
        <dbReference type="ChEBI" id="CHEBI:59789"/>
    </ligand>
</feature>
<feature type="binding site" evidence="1">
    <location>
        <begin position="184"/>
        <end position="185"/>
    </location>
    <ligand>
        <name>S-adenosyl-L-methionine</name>
        <dbReference type="ChEBI" id="CHEBI:59789"/>
    </ligand>
</feature>
<feature type="binding site" evidence="1">
    <location>
        <position position="212"/>
    </location>
    <ligand>
        <name>S-adenosyl-L-methionine</name>
        <dbReference type="ChEBI" id="CHEBI:59789"/>
    </ligand>
</feature>